<name>QUEF_HAHCH</name>
<organism>
    <name type="scientific">Hahella chejuensis (strain KCTC 2396)</name>
    <dbReference type="NCBI Taxonomy" id="349521"/>
    <lineage>
        <taxon>Bacteria</taxon>
        <taxon>Pseudomonadati</taxon>
        <taxon>Pseudomonadota</taxon>
        <taxon>Gammaproteobacteria</taxon>
        <taxon>Oceanospirillales</taxon>
        <taxon>Hahellaceae</taxon>
        <taxon>Hahella</taxon>
    </lineage>
</organism>
<proteinExistence type="inferred from homology"/>
<accession>Q2SDT2</accession>
<protein>
    <recommendedName>
        <fullName evidence="1">NADPH-dependent 7-cyano-7-deazaguanine reductase</fullName>
        <ecNumber evidence="1">1.7.1.13</ecNumber>
    </recommendedName>
    <alternativeName>
        <fullName evidence="1">7-cyano-7-carbaguanine reductase</fullName>
    </alternativeName>
    <alternativeName>
        <fullName evidence="1">NADPH-dependent nitrile oxidoreductase</fullName>
    </alternativeName>
    <alternativeName>
        <fullName evidence="1">PreQ(0) reductase</fullName>
    </alternativeName>
</protein>
<feature type="chain" id="PRO_0000247710" description="NADPH-dependent 7-cyano-7-deazaguanine reductase">
    <location>
        <begin position="1"/>
        <end position="274"/>
    </location>
</feature>
<feature type="active site" description="Thioimide intermediate" evidence="1">
    <location>
        <position position="182"/>
    </location>
</feature>
<feature type="active site" description="Proton donor" evidence="1">
    <location>
        <position position="189"/>
    </location>
</feature>
<feature type="binding site" evidence="1">
    <location>
        <begin position="81"/>
        <end position="83"/>
    </location>
    <ligand>
        <name>substrate</name>
    </ligand>
</feature>
<feature type="binding site" evidence="1">
    <location>
        <begin position="83"/>
        <end position="84"/>
    </location>
    <ligand>
        <name>NADPH</name>
        <dbReference type="ChEBI" id="CHEBI:57783"/>
    </ligand>
</feature>
<feature type="binding site" evidence="1">
    <location>
        <begin position="221"/>
        <end position="222"/>
    </location>
    <ligand>
        <name>substrate</name>
    </ligand>
</feature>
<feature type="binding site" evidence="1">
    <location>
        <begin position="250"/>
        <end position="251"/>
    </location>
    <ligand>
        <name>NADPH</name>
        <dbReference type="ChEBI" id="CHEBI:57783"/>
    </ligand>
</feature>
<evidence type="ECO:0000255" key="1">
    <source>
        <dbReference type="HAMAP-Rule" id="MF_00817"/>
    </source>
</evidence>
<comment type="function">
    <text evidence="1">Catalyzes the NADPH-dependent reduction of 7-cyano-7-deazaguanine (preQ0) to 7-aminomethyl-7-deazaguanine (preQ1).</text>
</comment>
<comment type="catalytic activity">
    <reaction evidence="1">
        <text>7-aminomethyl-7-carbaguanine + 2 NADP(+) = 7-cyano-7-deazaguanine + 2 NADPH + 3 H(+)</text>
        <dbReference type="Rhea" id="RHEA:13409"/>
        <dbReference type="ChEBI" id="CHEBI:15378"/>
        <dbReference type="ChEBI" id="CHEBI:45075"/>
        <dbReference type="ChEBI" id="CHEBI:57783"/>
        <dbReference type="ChEBI" id="CHEBI:58349"/>
        <dbReference type="ChEBI" id="CHEBI:58703"/>
        <dbReference type="EC" id="1.7.1.13"/>
    </reaction>
</comment>
<comment type="pathway">
    <text evidence="1">tRNA modification; tRNA-queuosine biosynthesis.</text>
</comment>
<comment type="subunit">
    <text evidence="1">Homodimer.</text>
</comment>
<comment type="subcellular location">
    <subcellularLocation>
        <location evidence="1">Cytoplasm</location>
    </subcellularLocation>
</comment>
<comment type="similarity">
    <text evidence="1">Belongs to the GTP cyclohydrolase I family. QueF type 2 subfamily.</text>
</comment>
<sequence>MELEKHTHLGKATEYPEEYSPSWLTPIPRAKSRETLGLSGKPDFVGEDLWNGYELSWLNSKGKPEVALGVFRIRCDSLNIIESKSFKLYLNSFNQSRFTSREEVEALMRKDLSAAAQGEVSVTLLSVTDWRDEPSFWRDAENLDVLDIDVDVYTPDASLLPDPVGDDVVEETLSSDLLKSNCPVTGQPDWATLYIHYRGKPLEKAALLKYIVSMRSHQDFHEHCVESVYLTLMQRYQPEKLAVYARYTRRGGLDINPLRSNYPLAADNFKLPRQ</sequence>
<reference key="1">
    <citation type="journal article" date="2005" name="Nucleic Acids Res.">
        <title>Genomic blueprint of Hahella chejuensis, a marine microbe producing an algicidal agent.</title>
        <authorList>
            <person name="Jeong H."/>
            <person name="Yim J.H."/>
            <person name="Lee C."/>
            <person name="Choi S.-H."/>
            <person name="Park Y.K."/>
            <person name="Yoon S.H."/>
            <person name="Hur C.-G."/>
            <person name="Kang H.-Y."/>
            <person name="Kim D."/>
            <person name="Lee H.H."/>
            <person name="Park K.H."/>
            <person name="Park S.-H."/>
            <person name="Park H.-S."/>
            <person name="Lee H.K."/>
            <person name="Oh T.K."/>
            <person name="Kim J.F."/>
        </authorList>
    </citation>
    <scope>NUCLEOTIDE SEQUENCE [LARGE SCALE GENOMIC DNA]</scope>
    <source>
        <strain>KCTC 2396</strain>
    </source>
</reference>
<keyword id="KW-0963">Cytoplasm</keyword>
<keyword id="KW-0521">NADP</keyword>
<keyword id="KW-0560">Oxidoreductase</keyword>
<keyword id="KW-0671">Queuosine biosynthesis</keyword>
<keyword id="KW-1185">Reference proteome</keyword>
<gene>
    <name evidence="1" type="primary">queF</name>
    <name type="ordered locus">HCH_04489</name>
</gene>
<dbReference type="EC" id="1.7.1.13" evidence="1"/>
<dbReference type="EMBL" id="CP000155">
    <property type="protein sequence ID" value="ABC31192.1"/>
    <property type="molecule type" value="Genomic_DNA"/>
</dbReference>
<dbReference type="RefSeq" id="WP_011398259.1">
    <property type="nucleotide sequence ID" value="NC_007645.1"/>
</dbReference>
<dbReference type="SMR" id="Q2SDT2"/>
<dbReference type="STRING" id="349521.HCH_04489"/>
<dbReference type="KEGG" id="hch:HCH_04489"/>
<dbReference type="eggNOG" id="COG0780">
    <property type="taxonomic scope" value="Bacteria"/>
</dbReference>
<dbReference type="eggNOG" id="COG2904">
    <property type="taxonomic scope" value="Bacteria"/>
</dbReference>
<dbReference type="HOGENOM" id="CLU_054738_0_0_6"/>
<dbReference type="OrthoDB" id="9789995at2"/>
<dbReference type="UniPathway" id="UPA00392"/>
<dbReference type="Proteomes" id="UP000000238">
    <property type="component" value="Chromosome"/>
</dbReference>
<dbReference type="GO" id="GO:0005737">
    <property type="term" value="C:cytoplasm"/>
    <property type="evidence" value="ECO:0007669"/>
    <property type="project" value="UniProtKB-SubCell"/>
</dbReference>
<dbReference type="GO" id="GO:0033739">
    <property type="term" value="F:preQ1 synthase activity"/>
    <property type="evidence" value="ECO:0007669"/>
    <property type="project" value="UniProtKB-UniRule"/>
</dbReference>
<dbReference type="GO" id="GO:0008616">
    <property type="term" value="P:queuosine biosynthetic process"/>
    <property type="evidence" value="ECO:0007669"/>
    <property type="project" value="UniProtKB-UniRule"/>
</dbReference>
<dbReference type="GO" id="GO:0006400">
    <property type="term" value="P:tRNA modification"/>
    <property type="evidence" value="ECO:0007669"/>
    <property type="project" value="UniProtKB-UniRule"/>
</dbReference>
<dbReference type="Gene3D" id="3.30.1130.10">
    <property type="match status" value="2"/>
</dbReference>
<dbReference type="HAMAP" id="MF_00817">
    <property type="entry name" value="QueF_type2"/>
    <property type="match status" value="1"/>
</dbReference>
<dbReference type="InterPro" id="IPR043133">
    <property type="entry name" value="GTP-CH-I_C/QueF"/>
</dbReference>
<dbReference type="InterPro" id="IPR050084">
    <property type="entry name" value="NADPH_dep_7-cyano-7-deazaG_red"/>
</dbReference>
<dbReference type="InterPro" id="IPR029500">
    <property type="entry name" value="QueF"/>
</dbReference>
<dbReference type="InterPro" id="IPR029139">
    <property type="entry name" value="QueF_N"/>
</dbReference>
<dbReference type="InterPro" id="IPR016428">
    <property type="entry name" value="QueF_type2"/>
</dbReference>
<dbReference type="NCBIfam" id="TIGR03138">
    <property type="entry name" value="QueF"/>
    <property type="match status" value="1"/>
</dbReference>
<dbReference type="PANTHER" id="PTHR34354">
    <property type="entry name" value="NADPH-DEPENDENT 7-CYANO-7-DEAZAGUANINE REDUCTASE"/>
    <property type="match status" value="1"/>
</dbReference>
<dbReference type="PANTHER" id="PTHR34354:SF1">
    <property type="entry name" value="NADPH-DEPENDENT 7-CYANO-7-DEAZAGUANINE REDUCTASE"/>
    <property type="match status" value="1"/>
</dbReference>
<dbReference type="Pfam" id="PF14489">
    <property type="entry name" value="QueF"/>
    <property type="match status" value="1"/>
</dbReference>
<dbReference type="Pfam" id="PF14819">
    <property type="entry name" value="QueF_N"/>
    <property type="match status" value="1"/>
</dbReference>
<dbReference type="PIRSF" id="PIRSF004750">
    <property type="entry name" value="Nitrile_oxidored_YqcD_prd"/>
    <property type="match status" value="1"/>
</dbReference>
<dbReference type="SUPFAM" id="SSF55620">
    <property type="entry name" value="Tetrahydrobiopterin biosynthesis enzymes-like"/>
    <property type="match status" value="1"/>
</dbReference>